<comment type="function">
    <text evidence="2">With S4 and S5 plays an important role in translational accuracy.</text>
</comment>
<comment type="function">
    <text evidence="2">Interacts with and stabilizes bases of the 16S rRNA that are involved in tRNA selection in the A site and with the mRNA backbone. Located at the interface of the 30S and 50S subunits, it traverses the body of the 30S subunit contacting proteins on the other side and probably holding the rRNA structure together. The combined cluster of proteins S8, S12 and S17 appears to hold together the shoulder and platform of the 30S subunit.</text>
</comment>
<comment type="subunit">
    <text evidence="2">Part of the 30S ribosomal subunit. Contacts proteins S8 and S17. May interact with IF1 in the 30S initiation complex.</text>
</comment>
<comment type="similarity">
    <text evidence="2">Belongs to the universal ribosomal protein uS12 family.</text>
</comment>
<keyword id="KW-0488">Methylation</keyword>
<keyword id="KW-0687">Ribonucleoprotein</keyword>
<keyword id="KW-0689">Ribosomal protein</keyword>
<keyword id="KW-0694">RNA-binding</keyword>
<keyword id="KW-0699">rRNA-binding</keyword>
<keyword id="KW-0820">tRNA-binding</keyword>
<accession>C6E4R2</accession>
<sequence length="123" mass="13569">MPTINQLIRHGRESKGDKSTAPALRSCPQKRGVCTRVYTTTPKKPNSALRKVARVRLTNGVEVTSYIPGVGHNLQEHSVVLIRGGRVKDLPGVRYHIVRGTLDSVGVKGRMKSRSKYGAKRPK</sequence>
<protein>
    <recommendedName>
        <fullName evidence="2">Small ribosomal subunit protein uS12</fullName>
    </recommendedName>
    <alternativeName>
        <fullName evidence="3">30S ribosomal protein S12</fullName>
    </alternativeName>
</protein>
<feature type="chain" id="PRO_1000205916" description="Small ribosomal subunit protein uS12">
    <location>
        <begin position="1"/>
        <end position="123"/>
    </location>
</feature>
<feature type="modified residue" description="3-methylthioaspartic acid" evidence="1">
    <location>
        <position position="89"/>
    </location>
</feature>
<proteinExistence type="inferred from homology"/>
<evidence type="ECO:0000250" key="1"/>
<evidence type="ECO:0000255" key="2">
    <source>
        <dbReference type="HAMAP-Rule" id="MF_00403"/>
    </source>
</evidence>
<evidence type="ECO:0000305" key="3"/>
<gene>
    <name evidence="2" type="primary">rpsL</name>
    <name type="ordered locus">GM21_3333</name>
</gene>
<organism>
    <name type="scientific">Geobacter sp. (strain M21)</name>
    <dbReference type="NCBI Taxonomy" id="443144"/>
    <lineage>
        <taxon>Bacteria</taxon>
        <taxon>Pseudomonadati</taxon>
        <taxon>Thermodesulfobacteriota</taxon>
        <taxon>Desulfuromonadia</taxon>
        <taxon>Geobacterales</taxon>
        <taxon>Geobacteraceae</taxon>
        <taxon>Geobacter</taxon>
    </lineage>
</organism>
<dbReference type="EMBL" id="CP001661">
    <property type="protein sequence ID" value="ACT19358.1"/>
    <property type="molecule type" value="Genomic_DNA"/>
</dbReference>
<dbReference type="SMR" id="C6E4R2"/>
<dbReference type="STRING" id="443144.GM21_3333"/>
<dbReference type="KEGG" id="gem:GM21_3333"/>
<dbReference type="eggNOG" id="COG0048">
    <property type="taxonomic scope" value="Bacteria"/>
</dbReference>
<dbReference type="HOGENOM" id="CLU_104295_1_2_7"/>
<dbReference type="OrthoDB" id="9802366at2"/>
<dbReference type="GO" id="GO:0015935">
    <property type="term" value="C:small ribosomal subunit"/>
    <property type="evidence" value="ECO:0007669"/>
    <property type="project" value="InterPro"/>
</dbReference>
<dbReference type="GO" id="GO:0019843">
    <property type="term" value="F:rRNA binding"/>
    <property type="evidence" value="ECO:0007669"/>
    <property type="project" value="UniProtKB-UniRule"/>
</dbReference>
<dbReference type="GO" id="GO:0003735">
    <property type="term" value="F:structural constituent of ribosome"/>
    <property type="evidence" value="ECO:0007669"/>
    <property type="project" value="InterPro"/>
</dbReference>
<dbReference type="GO" id="GO:0000049">
    <property type="term" value="F:tRNA binding"/>
    <property type="evidence" value="ECO:0007669"/>
    <property type="project" value="UniProtKB-UniRule"/>
</dbReference>
<dbReference type="GO" id="GO:0006412">
    <property type="term" value="P:translation"/>
    <property type="evidence" value="ECO:0007669"/>
    <property type="project" value="UniProtKB-UniRule"/>
</dbReference>
<dbReference type="CDD" id="cd03368">
    <property type="entry name" value="Ribosomal_S12"/>
    <property type="match status" value="1"/>
</dbReference>
<dbReference type="FunFam" id="2.40.50.140:FF:000001">
    <property type="entry name" value="30S ribosomal protein S12"/>
    <property type="match status" value="1"/>
</dbReference>
<dbReference type="Gene3D" id="2.40.50.140">
    <property type="entry name" value="Nucleic acid-binding proteins"/>
    <property type="match status" value="1"/>
</dbReference>
<dbReference type="HAMAP" id="MF_00403_B">
    <property type="entry name" value="Ribosomal_uS12_B"/>
    <property type="match status" value="1"/>
</dbReference>
<dbReference type="InterPro" id="IPR012340">
    <property type="entry name" value="NA-bd_OB-fold"/>
</dbReference>
<dbReference type="InterPro" id="IPR006032">
    <property type="entry name" value="Ribosomal_uS12"/>
</dbReference>
<dbReference type="InterPro" id="IPR005679">
    <property type="entry name" value="Ribosomal_uS12_bac"/>
</dbReference>
<dbReference type="NCBIfam" id="TIGR00981">
    <property type="entry name" value="rpsL_bact"/>
    <property type="match status" value="1"/>
</dbReference>
<dbReference type="PANTHER" id="PTHR11652">
    <property type="entry name" value="30S RIBOSOMAL PROTEIN S12 FAMILY MEMBER"/>
    <property type="match status" value="1"/>
</dbReference>
<dbReference type="Pfam" id="PF00164">
    <property type="entry name" value="Ribosom_S12_S23"/>
    <property type="match status" value="1"/>
</dbReference>
<dbReference type="PIRSF" id="PIRSF002133">
    <property type="entry name" value="Ribosomal_S12/S23"/>
    <property type="match status" value="1"/>
</dbReference>
<dbReference type="PRINTS" id="PR01034">
    <property type="entry name" value="RIBOSOMALS12"/>
</dbReference>
<dbReference type="SUPFAM" id="SSF50249">
    <property type="entry name" value="Nucleic acid-binding proteins"/>
    <property type="match status" value="1"/>
</dbReference>
<dbReference type="PROSITE" id="PS00055">
    <property type="entry name" value="RIBOSOMAL_S12"/>
    <property type="match status" value="1"/>
</dbReference>
<reference key="1">
    <citation type="submission" date="2009-07" db="EMBL/GenBank/DDBJ databases">
        <title>Complete sequence of Geobacter sp. M21.</title>
        <authorList>
            <consortium name="US DOE Joint Genome Institute"/>
            <person name="Lucas S."/>
            <person name="Copeland A."/>
            <person name="Lapidus A."/>
            <person name="Glavina del Rio T."/>
            <person name="Dalin E."/>
            <person name="Tice H."/>
            <person name="Bruce D."/>
            <person name="Goodwin L."/>
            <person name="Pitluck S."/>
            <person name="Saunders E."/>
            <person name="Brettin T."/>
            <person name="Detter J.C."/>
            <person name="Han C."/>
            <person name="Larimer F."/>
            <person name="Land M."/>
            <person name="Hauser L."/>
            <person name="Kyrpides N."/>
            <person name="Ovchinnikova G."/>
            <person name="Lovley D."/>
        </authorList>
    </citation>
    <scope>NUCLEOTIDE SEQUENCE [LARGE SCALE GENOMIC DNA]</scope>
    <source>
        <strain>M21</strain>
    </source>
</reference>
<name>RS12_GEOSM</name>